<sequence>MGQKVHPIGMRVGIIRDWDAKWYAEKEYADYLHEDLAIRKFINKELADASVSTIEIERAVNKVIVSLHTAKPGMVIGKGGANVDALRGQLNKLTGKQVHINIIEIKQPDLDAHLVGENIARQLEQRVAFRRAQKQAIQRTMRAGAKGIKTQVSGRLNGADIARAEGYSEGTVPLHTLRADIDYAWEEADTTYGKLGVKVWIYRGEVLPARKNTKGGK</sequence>
<reference key="1">
    <citation type="journal article" date="2006" name="Proc. Natl. Acad. Sci. U.S.A.">
        <title>Molecular genetic anatomy of inter- and intraserotype variation in the human bacterial pathogen group A Streptococcus.</title>
        <authorList>
            <person name="Beres S.B."/>
            <person name="Richter E.W."/>
            <person name="Nagiec M.J."/>
            <person name="Sumby P."/>
            <person name="Porcella S.F."/>
            <person name="DeLeo F.R."/>
            <person name="Musser J.M."/>
        </authorList>
    </citation>
    <scope>NUCLEOTIDE SEQUENCE [LARGE SCALE GENOMIC DNA]</scope>
    <source>
        <strain>MGAS9429</strain>
    </source>
</reference>
<accession>Q1JP11</accession>
<gene>
    <name evidence="1" type="primary">rpsC</name>
    <name type="ordered locus">MGAS9429_Spy0050</name>
</gene>
<keyword id="KW-0687">Ribonucleoprotein</keyword>
<keyword id="KW-0689">Ribosomal protein</keyword>
<keyword id="KW-0694">RNA-binding</keyword>
<keyword id="KW-0699">rRNA-binding</keyword>
<comment type="function">
    <text evidence="1">Binds the lower part of the 30S subunit head. Binds mRNA in the 70S ribosome, positioning it for translation.</text>
</comment>
<comment type="subunit">
    <text evidence="1">Part of the 30S ribosomal subunit. Forms a tight complex with proteins S10 and S14.</text>
</comment>
<comment type="similarity">
    <text evidence="1">Belongs to the universal ribosomal protein uS3 family.</text>
</comment>
<proteinExistence type="inferred from homology"/>
<protein>
    <recommendedName>
        <fullName evidence="1">Small ribosomal subunit protein uS3</fullName>
    </recommendedName>
    <alternativeName>
        <fullName evidence="2">30S ribosomal protein S3</fullName>
    </alternativeName>
</protein>
<name>RS3_STRPC</name>
<feature type="chain" id="PRO_0000293895" description="Small ribosomal subunit protein uS3">
    <location>
        <begin position="1"/>
        <end position="217"/>
    </location>
</feature>
<feature type="domain" description="KH type-2" evidence="1">
    <location>
        <begin position="38"/>
        <end position="106"/>
    </location>
</feature>
<organism>
    <name type="scientific">Streptococcus pyogenes serotype M12 (strain MGAS9429)</name>
    <dbReference type="NCBI Taxonomy" id="370551"/>
    <lineage>
        <taxon>Bacteria</taxon>
        <taxon>Bacillati</taxon>
        <taxon>Bacillota</taxon>
        <taxon>Bacilli</taxon>
        <taxon>Lactobacillales</taxon>
        <taxon>Streptococcaceae</taxon>
        <taxon>Streptococcus</taxon>
    </lineage>
</organism>
<dbReference type="EMBL" id="CP000259">
    <property type="protein sequence ID" value="ABF31238.1"/>
    <property type="molecule type" value="Genomic_DNA"/>
</dbReference>
<dbReference type="RefSeq" id="WP_000529929.1">
    <property type="nucleotide sequence ID" value="NC_008021.1"/>
</dbReference>
<dbReference type="SMR" id="Q1JP11"/>
<dbReference type="GeneID" id="69900032"/>
<dbReference type="KEGG" id="spk:MGAS9429_Spy0050"/>
<dbReference type="HOGENOM" id="CLU_058591_0_2_9"/>
<dbReference type="Proteomes" id="UP000002433">
    <property type="component" value="Chromosome"/>
</dbReference>
<dbReference type="GO" id="GO:0022627">
    <property type="term" value="C:cytosolic small ribosomal subunit"/>
    <property type="evidence" value="ECO:0007669"/>
    <property type="project" value="TreeGrafter"/>
</dbReference>
<dbReference type="GO" id="GO:0003729">
    <property type="term" value="F:mRNA binding"/>
    <property type="evidence" value="ECO:0007669"/>
    <property type="project" value="UniProtKB-UniRule"/>
</dbReference>
<dbReference type="GO" id="GO:0019843">
    <property type="term" value="F:rRNA binding"/>
    <property type="evidence" value="ECO:0007669"/>
    <property type="project" value="UniProtKB-UniRule"/>
</dbReference>
<dbReference type="GO" id="GO:0003735">
    <property type="term" value="F:structural constituent of ribosome"/>
    <property type="evidence" value="ECO:0007669"/>
    <property type="project" value="InterPro"/>
</dbReference>
<dbReference type="GO" id="GO:0006412">
    <property type="term" value="P:translation"/>
    <property type="evidence" value="ECO:0007669"/>
    <property type="project" value="UniProtKB-UniRule"/>
</dbReference>
<dbReference type="CDD" id="cd02412">
    <property type="entry name" value="KH-II_30S_S3"/>
    <property type="match status" value="1"/>
</dbReference>
<dbReference type="FunFam" id="3.30.1140.32:FF:000001">
    <property type="entry name" value="30S ribosomal protein S3"/>
    <property type="match status" value="1"/>
</dbReference>
<dbReference type="FunFam" id="3.30.300.20:FF:000001">
    <property type="entry name" value="30S ribosomal protein S3"/>
    <property type="match status" value="1"/>
</dbReference>
<dbReference type="Gene3D" id="3.30.300.20">
    <property type="match status" value="1"/>
</dbReference>
<dbReference type="Gene3D" id="3.30.1140.32">
    <property type="entry name" value="Ribosomal protein S3, C-terminal domain"/>
    <property type="match status" value="1"/>
</dbReference>
<dbReference type="HAMAP" id="MF_01309_B">
    <property type="entry name" value="Ribosomal_uS3_B"/>
    <property type="match status" value="1"/>
</dbReference>
<dbReference type="InterPro" id="IPR004087">
    <property type="entry name" value="KH_dom"/>
</dbReference>
<dbReference type="InterPro" id="IPR015946">
    <property type="entry name" value="KH_dom-like_a/b"/>
</dbReference>
<dbReference type="InterPro" id="IPR004044">
    <property type="entry name" value="KH_dom_type_2"/>
</dbReference>
<dbReference type="InterPro" id="IPR009019">
    <property type="entry name" value="KH_sf_prok-type"/>
</dbReference>
<dbReference type="InterPro" id="IPR036419">
    <property type="entry name" value="Ribosomal_S3_C_sf"/>
</dbReference>
<dbReference type="InterPro" id="IPR005704">
    <property type="entry name" value="Ribosomal_uS3_bac-typ"/>
</dbReference>
<dbReference type="InterPro" id="IPR001351">
    <property type="entry name" value="Ribosomal_uS3_C"/>
</dbReference>
<dbReference type="InterPro" id="IPR018280">
    <property type="entry name" value="Ribosomal_uS3_CS"/>
</dbReference>
<dbReference type="NCBIfam" id="TIGR01009">
    <property type="entry name" value="rpsC_bact"/>
    <property type="match status" value="1"/>
</dbReference>
<dbReference type="PANTHER" id="PTHR11760">
    <property type="entry name" value="30S/40S RIBOSOMAL PROTEIN S3"/>
    <property type="match status" value="1"/>
</dbReference>
<dbReference type="PANTHER" id="PTHR11760:SF19">
    <property type="entry name" value="SMALL RIBOSOMAL SUBUNIT PROTEIN US3C"/>
    <property type="match status" value="1"/>
</dbReference>
<dbReference type="Pfam" id="PF07650">
    <property type="entry name" value="KH_2"/>
    <property type="match status" value="1"/>
</dbReference>
<dbReference type="Pfam" id="PF00189">
    <property type="entry name" value="Ribosomal_S3_C"/>
    <property type="match status" value="1"/>
</dbReference>
<dbReference type="SMART" id="SM00322">
    <property type="entry name" value="KH"/>
    <property type="match status" value="1"/>
</dbReference>
<dbReference type="SUPFAM" id="SSF54814">
    <property type="entry name" value="Prokaryotic type KH domain (KH-domain type II)"/>
    <property type="match status" value="1"/>
</dbReference>
<dbReference type="SUPFAM" id="SSF54821">
    <property type="entry name" value="Ribosomal protein S3 C-terminal domain"/>
    <property type="match status" value="1"/>
</dbReference>
<dbReference type="PROSITE" id="PS50823">
    <property type="entry name" value="KH_TYPE_2"/>
    <property type="match status" value="1"/>
</dbReference>
<dbReference type="PROSITE" id="PS00548">
    <property type="entry name" value="RIBOSOMAL_S3"/>
    <property type="match status" value="1"/>
</dbReference>
<evidence type="ECO:0000255" key="1">
    <source>
        <dbReference type="HAMAP-Rule" id="MF_01309"/>
    </source>
</evidence>
<evidence type="ECO:0000305" key="2"/>